<keyword id="KW-0997">Cell inner membrane</keyword>
<keyword id="KW-1003">Cell membrane</keyword>
<keyword id="KW-0249">Electron transport</keyword>
<keyword id="KW-0285">Flavoprotein</keyword>
<keyword id="KW-0288">FMN</keyword>
<keyword id="KW-0472">Membrane</keyword>
<keyword id="KW-0597">Phosphoprotein</keyword>
<keyword id="KW-1185">Reference proteome</keyword>
<keyword id="KW-1278">Translocase</keyword>
<keyword id="KW-0812">Transmembrane</keyword>
<keyword id="KW-1133">Transmembrane helix</keyword>
<keyword id="KW-0813">Transport</keyword>
<evidence type="ECO:0000255" key="1">
    <source>
        <dbReference type="HAMAP-Rule" id="MF_00462"/>
    </source>
</evidence>
<organism>
    <name type="scientific">Escherichia coli O6:H1 (strain CFT073 / ATCC 700928 / UPEC)</name>
    <dbReference type="NCBI Taxonomy" id="199310"/>
    <lineage>
        <taxon>Bacteria</taxon>
        <taxon>Pseudomonadati</taxon>
        <taxon>Pseudomonadota</taxon>
        <taxon>Gammaproteobacteria</taxon>
        <taxon>Enterobacterales</taxon>
        <taxon>Enterobacteriaceae</taxon>
        <taxon>Escherichia</taxon>
    </lineage>
</organism>
<comment type="function">
    <text evidence="1">Part of a membrane-bound complex that couples electron transfer with translocation of ions across the membrane. Required to maintain the reduced state of SoxR.</text>
</comment>
<comment type="cofactor">
    <cofactor evidence="1">
        <name>FMN</name>
        <dbReference type="ChEBI" id="CHEBI:58210"/>
    </cofactor>
</comment>
<comment type="subunit">
    <text evidence="1">The complex is composed of six subunits: RsxA, RsxB, RsxC, RsxD, RsxE and RsxG.</text>
</comment>
<comment type="subcellular location">
    <subcellularLocation>
        <location evidence="1">Cell inner membrane</location>
        <topology evidence="1">Multi-pass membrane protein</topology>
    </subcellularLocation>
</comment>
<comment type="similarity">
    <text evidence="1">Belongs to the NqrB/RnfD family.</text>
</comment>
<feature type="chain" id="PRO_0000298230" description="Ion-translocating oxidoreductase complex subunit D">
    <location>
        <begin position="1"/>
        <end position="352"/>
    </location>
</feature>
<feature type="transmembrane region" description="Helical" evidence="1">
    <location>
        <begin position="20"/>
        <end position="40"/>
    </location>
</feature>
<feature type="transmembrane region" description="Helical" evidence="1">
    <location>
        <begin position="42"/>
        <end position="62"/>
    </location>
</feature>
<feature type="transmembrane region" description="Helical" evidence="1">
    <location>
        <begin position="78"/>
        <end position="109"/>
    </location>
</feature>
<feature type="transmembrane region" description="Helical" evidence="1">
    <location>
        <begin position="123"/>
        <end position="143"/>
    </location>
</feature>
<feature type="transmembrane region" description="Helical" evidence="1">
    <location>
        <begin position="148"/>
        <end position="168"/>
    </location>
</feature>
<feature type="transmembrane region" description="Helical" evidence="1">
    <location>
        <begin position="214"/>
        <end position="234"/>
    </location>
</feature>
<feature type="transmembrane region" description="Helical" evidence="1">
    <location>
        <begin position="242"/>
        <end position="262"/>
    </location>
</feature>
<feature type="transmembrane region" description="Helical" evidence="1">
    <location>
        <begin position="267"/>
        <end position="287"/>
    </location>
</feature>
<feature type="transmembrane region" description="Helical" evidence="1">
    <location>
        <begin position="301"/>
        <end position="321"/>
    </location>
</feature>
<feature type="transmembrane region" description="Helical" evidence="1">
    <location>
        <begin position="322"/>
        <end position="342"/>
    </location>
</feature>
<feature type="modified residue" description="FMN phosphoryl threonine" evidence="1">
    <location>
        <position position="187"/>
    </location>
</feature>
<protein>
    <recommendedName>
        <fullName evidence="1">Ion-translocating oxidoreductase complex subunit D</fullName>
        <ecNumber evidence="1">7.-.-.-</ecNumber>
    </recommendedName>
    <alternativeName>
        <fullName evidence="1">Rsx electron transport complex subunit D</fullName>
    </alternativeName>
</protein>
<gene>
    <name evidence="1" type="primary">rsxD</name>
    <name type="ordered locus">c2022</name>
</gene>
<proteinExistence type="inferred from homology"/>
<reference key="1">
    <citation type="journal article" date="2002" name="Proc. Natl. Acad. Sci. U.S.A.">
        <title>Extensive mosaic structure revealed by the complete genome sequence of uropathogenic Escherichia coli.</title>
        <authorList>
            <person name="Welch R.A."/>
            <person name="Burland V."/>
            <person name="Plunkett G. III"/>
            <person name="Redford P."/>
            <person name="Roesch P."/>
            <person name="Rasko D."/>
            <person name="Buckles E.L."/>
            <person name="Liou S.-R."/>
            <person name="Boutin A."/>
            <person name="Hackett J."/>
            <person name="Stroud D."/>
            <person name="Mayhew G.F."/>
            <person name="Rose D.J."/>
            <person name="Zhou S."/>
            <person name="Schwartz D.C."/>
            <person name="Perna N.T."/>
            <person name="Mobley H.L.T."/>
            <person name="Donnenberg M.S."/>
            <person name="Blattner F.R."/>
        </authorList>
    </citation>
    <scope>NUCLEOTIDE SEQUENCE [LARGE SCALE GENOMIC DNA]</scope>
    <source>
        <strain>CFT073 / ATCC 700928 / UPEC</strain>
    </source>
</reference>
<sequence>MVFRIASSPYTHNQRQTSRIMLLVLLAAVPGIAAQLWFFGWGTLVQILLASVSALLAEALVLKLRKQSVAATLKDNSALLTGLLLAVSIPPLAPWWMVVLGTVFAVIIAKQLYGGLGQNPFNPAMIGYVVLLISFPVQMTSWLPPHEIAVNIPGFIDAIQVIFSGHTASGGDMNTLRLGIDGISQATPLDTFKTSVRAGHSVEQIMQYPIYSGILAGVGWQWVNLAWLAGGVWLLWQKAIRWHIPLSFLVTLALCATLGWLFSPETLAAPQIHLLSGATMLGAFFILTDPVTASTTNRGRLIFGALAGLLVWMIRSFGGYPDGVAFAVLLANITVPLIDYYTRPRVYGHRKG</sequence>
<accession>Q8FH94</accession>
<dbReference type="EC" id="7.-.-.-" evidence="1"/>
<dbReference type="EMBL" id="AE014075">
    <property type="protein sequence ID" value="AAN80482.1"/>
    <property type="molecule type" value="Genomic_DNA"/>
</dbReference>
<dbReference type="RefSeq" id="WP_000231933.1">
    <property type="nucleotide sequence ID" value="NZ_CP051263.1"/>
</dbReference>
<dbReference type="SMR" id="Q8FH94"/>
<dbReference type="STRING" id="199310.c2022"/>
<dbReference type="KEGG" id="ecc:c2022"/>
<dbReference type="eggNOG" id="COG4658">
    <property type="taxonomic scope" value="Bacteria"/>
</dbReference>
<dbReference type="HOGENOM" id="CLU_042020_0_0_6"/>
<dbReference type="BioCyc" id="ECOL199310:C2022-MONOMER"/>
<dbReference type="Proteomes" id="UP000001410">
    <property type="component" value="Chromosome"/>
</dbReference>
<dbReference type="GO" id="GO:0005886">
    <property type="term" value="C:plasma membrane"/>
    <property type="evidence" value="ECO:0007669"/>
    <property type="project" value="UniProtKB-SubCell"/>
</dbReference>
<dbReference type="GO" id="GO:0022900">
    <property type="term" value="P:electron transport chain"/>
    <property type="evidence" value="ECO:0007669"/>
    <property type="project" value="UniProtKB-UniRule"/>
</dbReference>
<dbReference type="GO" id="GO:0055085">
    <property type="term" value="P:transmembrane transport"/>
    <property type="evidence" value="ECO:0007669"/>
    <property type="project" value="InterPro"/>
</dbReference>
<dbReference type="HAMAP" id="MF_00462">
    <property type="entry name" value="RsxD_RnfD"/>
    <property type="match status" value="1"/>
</dbReference>
<dbReference type="InterPro" id="IPR004338">
    <property type="entry name" value="NqrB/RnfD"/>
</dbReference>
<dbReference type="InterPro" id="IPR011303">
    <property type="entry name" value="RnfD_bac"/>
</dbReference>
<dbReference type="NCBIfam" id="NF002011">
    <property type="entry name" value="PRK00816.1"/>
    <property type="match status" value="1"/>
</dbReference>
<dbReference type="NCBIfam" id="TIGR01946">
    <property type="entry name" value="rnfD"/>
    <property type="match status" value="1"/>
</dbReference>
<dbReference type="PANTHER" id="PTHR30578">
    <property type="entry name" value="ELECTRON TRANSPORT COMPLEX PROTEIN RNFD"/>
    <property type="match status" value="1"/>
</dbReference>
<dbReference type="PANTHER" id="PTHR30578:SF0">
    <property type="entry name" value="ION-TRANSLOCATING OXIDOREDUCTASE COMPLEX SUBUNIT D"/>
    <property type="match status" value="1"/>
</dbReference>
<dbReference type="Pfam" id="PF03116">
    <property type="entry name" value="NQR2_RnfD_RnfE"/>
    <property type="match status" value="1"/>
</dbReference>
<name>RSXD_ECOL6</name>